<name>AATA_METVS</name>
<proteinExistence type="inferred from homology"/>
<reference key="1">
    <citation type="submission" date="2007-06" db="EMBL/GenBank/DDBJ databases">
        <title>Complete sequence of Methanococcus vannielii SB.</title>
        <authorList>
            <consortium name="US DOE Joint Genome Institute"/>
            <person name="Copeland A."/>
            <person name="Lucas S."/>
            <person name="Lapidus A."/>
            <person name="Barry K."/>
            <person name="Glavina del Rio T."/>
            <person name="Dalin E."/>
            <person name="Tice H."/>
            <person name="Pitluck S."/>
            <person name="Chain P."/>
            <person name="Malfatti S."/>
            <person name="Shin M."/>
            <person name="Vergez L."/>
            <person name="Schmutz J."/>
            <person name="Larimer F."/>
            <person name="Land M."/>
            <person name="Hauser L."/>
            <person name="Kyrpides N."/>
            <person name="Anderson I."/>
            <person name="Sieprawska-Lupa M."/>
            <person name="Whitman W.B."/>
            <person name="Richardson P."/>
        </authorList>
    </citation>
    <scope>NUCLEOTIDE SEQUENCE [LARGE SCALE GENOMIC DNA]</scope>
    <source>
        <strain>ATCC 35089 / DSM 1224 / JCM 13029 / OCM 148 / SB</strain>
    </source>
</reference>
<gene>
    <name evidence="1" type="primary">atpA</name>
    <name type="ordered locus">Mevan_0367</name>
</gene>
<sequence>MVVGKIIKISGPVVVAEGMKGSQMYEVVKVGNEGLTGEIIQLTENEAIIQVYEETAGIKPGEGVTGTGAPLSVELGPGMLKAMYDGIQRPLNAIEDATNSIYIPRGVNVPSLPRDVKWDFVPSVNVGDEVLAGDIIGTVQETASIVHKILIPVGINGKIKEIKSGSFTVEETVAVVETEKGDKLVTMMQKWPVRKPRPSKVKLPPVIPLLTGQRVEDTFFGLAKGGASAIPGPFGSGKTVTQHQLAKWSDVDVVVYIGCGERGNEMTEVIEEFPHLDDIKTGNKLMDRTVLIANTSNMPVAAREASVYTGITIAEYFRDQGLGVLLTADSTSRWAEAMREISGRLEEMPGEEGYPAYLSSKLAQFYERAGRVDCLGSEDRQGFVCIVGAVSPPGGDFSEPVTSNTLRIVKVFWALDANLARRRHFPAINWLTSYSLYINDIAGWWKKNTGEDWRVLRDEAMGLLQKEAELQEIVQLVGPDALPDRERVILEIARILREDFLQQDAYHEVDSYCSPKKQYNMLKVIMTFYKKALDAVAKGADPAKLSAVSVKGDIARMKYMPEEEFIKTKVPEMIKKMESELGALIK</sequence>
<feature type="chain" id="PRO_0000322476" description="A-type ATP synthase subunit A">
    <location>
        <begin position="1"/>
        <end position="586"/>
    </location>
</feature>
<feature type="binding site" evidence="1">
    <location>
        <begin position="232"/>
        <end position="239"/>
    </location>
    <ligand>
        <name>ATP</name>
        <dbReference type="ChEBI" id="CHEBI:30616"/>
    </ligand>
</feature>
<organism>
    <name type="scientific">Methanococcus vannielii (strain ATCC 35089 / DSM 1224 / JCM 13029 / OCM 148 / SB)</name>
    <dbReference type="NCBI Taxonomy" id="406327"/>
    <lineage>
        <taxon>Archaea</taxon>
        <taxon>Methanobacteriati</taxon>
        <taxon>Methanobacteriota</taxon>
        <taxon>Methanomada group</taxon>
        <taxon>Methanococci</taxon>
        <taxon>Methanococcales</taxon>
        <taxon>Methanococcaceae</taxon>
        <taxon>Methanococcus</taxon>
    </lineage>
</organism>
<evidence type="ECO:0000255" key="1">
    <source>
        <dbReference type="HAMAP-Rule" id="MF_00309"/>
    </source>
</evidence>
<accession>A6UP54</accession>
<comment type="function">
    <text evidence="1">Component of the A-type ATP synthase that produces ATP from ADP in the presence of a proton gradient across the membrane. The A chain is the catalytic subunit.</text>
</comment>
<comment type="catalytic activity">
    <reaction evidence="1">
        <text>ATP + H2O + 4 H(+)(in) = ADP + phosphate + 5 H(+)(out)</text>
        <dbReference type="Rhea" id="RHEA:57720"/>
        <dbReference type="ChEBI" id="CHEBI:15377"/>
        <dbReference type="ChEBI" id="CHEBI:15378"/>
        <dbReference type="ChEBI" id="CHEBI:30616"/>
        <dbReference type="ChEBI" id="CHEBI:43474"/>
        <dbReference type="ChEBI" id="CHEBI:456216"/>
        <dbReference type="EC" id="7.1.2.2"/>
    </reaction>
</comment>
<comment type="subunit">
    <text evidence="1">Has multiple subunits with at least A(3), B(3), C, D, E, F, H, I and proteolipid K(x).</text>
</comment>
<comment type="subcellular location">
    <subcellularLocation>
        <location evidence="1">Cell membrane</location>
        <topology evidence="1">Peripheral membrane protein</topology>
    </subcellularLocation>
</comment>
<comment type="similarity">
    <text evidence="1">Belongs to the ATPase alpha/beta chains family.</text>
</comment>
<protein>
    <recommendedName>
        <fullName evidence="1">A-type ATP synthase subunit A</fullName>
        <ecNumber evidence="1">7.1.2.2</ecNumber>
    </recommendedName>
</protein>
<keyword id="KW-0066">ATP synthesis</keyword>
<keyword id="KW-0067">ATP-binding</keyword>
<keyword id="KW-1003">Cell membrane</keyword>
<keyword id="KW-0375">Hydrogen ion transport</keyword>
<keyword id="KW-0406">Ion transport</keyword>
<keyword id="KW-0472">Membrane</keyword>
<keyword id="KW-0547">Nucleotide-binding</keyword>
<keyword id="KW-1278">Translocase</keyword>
<keyword id="KW-0813">Transport</keyword>
<dbReference type="EC" id="7.1.2.2" evidence="1"/>
<dbReference type="EMBL" id="CP000742">
    <property type="protein sequence ID" value="ABR54276.1"/>
    <property type="molecule type" value="Genomic_DNA"/>
</dbReference>
<dbReference type="RefSeq" id="WP_011972179.1">
    <property type="nucleotide sequence ID" value="NC_009634.1"/>
</dbReference>
<dbReference type="SMR" id="A6UP54"/>
<dbReference type="STRING" id="406327.Mevan_0367"/>
<dbReference type="GeneID" id="5325799"/>
<dbReference type="KEGG" id="mvn:Mevan_0367"/>
<dbReference type="eggNOG" id="arCOG00868">
    <property type="taxonomic scope" value="Archaea"/>
</dbReference>
<dbReference type="HOGENOM" id="CLU_008162_3_1_2"/>
<dbReference type="OrthoDB" id="115235at2157"/>
<dbReference type="Proteomes" id="UP000001107">
    <property type="component" value="Chromosome"/>
</dbReference>
<dbReference type="GO" id="GO:0005886">
    <property type="term" value="C:plasma membrane"/>
    <property type="evidence" value="ECO:0007669"/>
    <property type="project" value="UniProtKB-SubCell"/>
</dbReference>
<dbReference type="GO" id="GO:0033178">
    <property type="term" value="C:proton-transporting two-sector ATPase complex, catalytic domain"/>
    <property type="evidence" value="ECO:0007669"/>
    <property type="project" value="InterPro"/>
</dbReference>
<dbReference type="GO" id="GO:0005524">
    <property type="term" value="F:ATP binding"/>
    <property type="evidence" value="ECO:0007669"/>
    <property type="project" value="UniProtKB-UniRule"/>
</dbReference>
<dbReference type="GO" id="GO:0046933">
    <property type="term" value="F:proton-transporting ATP synthase activity, rotational mechanism"/>
    <property type="evidence" value="ECO:0007669"/>
    <property type="project" value="UniProtKB-UniRule"/>
</dbReference>
<dbReference type="GO" id="GO:0046961">
    <property type="term" value="F:proton-transporting ATPase activity, rotational mechanism"/>
    <property type="evidence" value="ECO:0007669"/>
    <property type="project" value="InterPro"/>
</dbReference>
<dbReference type="GO" id="GO:0042777">
    <property type="term" value="P:proton motive force-driven plasma membrane ATP synthesis"/>
    <property type="evidence" value="ECO:0007669"/>
    <property type="project" value="UniProtKB-UniRule"/>
</dbReference>
<dbReference type="CDD" id="cd18111">
    <property type="entry name" value="ATP-synt_V_A-type_alpha_C"/>
    <property type="match status" value="1"/>
</dbReference>
<dbReference type="CDD" id="cd18119">
    <property type="entry name" value="ATP-synt_V_A-type_alpha_N"/>
    <property type="match status" value="1"/>
</dbReference>
<dbReference type="CDD" id="cd01134">
    <property type="entry name" value="V_A-ATPase_A"/>
    <property type="match status" value="1"/>
</dbReference>
<dbReference type="FunFam" id="1.10.1140.10:FF:000002">
    <property type="entry name" value="V-type proton ATPase catalytic subunit A"/>
    <property type="match status" value="1"/>
</dbReference>
<dbReference type="FunFam" id="2.40.30.20:FF:000002">
    <property type="entry name" value="V-type proton ATPase catalytic subunit A"/>
    <property type="match status" value="1"/>
</dbReference>
<dbReference type="FunFam" id="2.40.50.100:FF:000008">
    <property type="entry name" value="V-type proton ATPase catalytic subunit A"/>
    <property type="match status" value="1"/>
</dbReference>
<dbReference type="Gene3D" id="2.40.30.20">
    <property type="match status" value="1"/>
</dbReference>
<dbReference type="Gene3D" id="2.40.50.100">
    <property type="match status" value="1"/>
</dbReference>
<dbReference type="Gene3D" id="1.10.1140.10">
    <property type="entry name" value="Bovine Mitochondrial F1-atpase, Atp Synthase Beta Chain, Chain D, domain 3"/>
    <property type="match status" value="1"/>
</dbReference>
<dbReference type="Gene3D" id="3.40.50.300">
    <property type="entry name" value="P-loop containing nucleotide triphosphate hydrolases"/>
    <property type="match status" value="1"/>
</dbReference>
<dbReference type="HAMAP" id="MF_00309">
    <property type="entry name" value="ATP_synth_A_arch"/>
    <property type="match status" value="1"/>
</dbReference>
<dbReference type="InterPro" id="IPR055190">
    <property type="entry name" value="ATP-synt_VA_C"/>
</dbReference>
<dbReference type="InterPro" id="IPR031686">
    <property type="entry name" value="ATP-synth_a_Xtn"/>
</dbReference>
<dbReference type="InterPro" id="IPR023366">
    <property type="entry name" value="ATP_synth_asu-like_sf"/>
</dbReference>
<dbReference type="InterPro" id="IPR005726">
    <property type="entry name" value="ATP_synth_asu_arc"/>
</dbReference>
<dbReference type="InterPro" id="IPR020003">
    <property type="entry name" value="ATPase_a/bsu_AS"/>
</dbReference>
<dbReference type="InterPro" id="IPR004100">
    <property type="entry name" value="ATPase_F1/V1/A1_a/bsu_N"/>
</dbReference>
<dbReference type="InterPro" id="IPR036121">
    <property type="entry name" value="ATPase_F1/V1/A1_a/bsu_N_sf"/>
</dbReference>
<dbReference type="InterPro" id="IPR000194">
    <property type="entry name" value="ATPase_F1/V1/A1_a/bsu_nucl-bd"/>
</dbReference>
<dbReference type="InterPro" id="IPR024034">
    <property type="entry name" value="ATPase_F1/V1_b/a_C"/>
</dbReference>
<dbReference type="InterPro" id="IPR027417">
    <property type="entry name" value="P-loop_NTPase"/>
</dbReference>
<dbReference type="InterPro" id="IPR022878">
    <property type="entry name" value="V-ATPase_asu"/>
</dbReference>
<dbReference type="NCBIfam" id="TIGR01043">
    <property type="entry name" value="ATP_syn_A_arch"/>
    <property type="match status" value="1"/>
</dbReference>
<dbReference type="NCBIfam" id="NF003220">
    <property type="entry name" value="PRK04192.1"/>
    <property type="match status" value="1"/>
</dbReference>
<dbReference type="PANTHER" id="PTHR43607:SF1">
    <property type="entry name" value="H(+)-TRANSPORTING TWO-SECTOR ATPASE"/>
    <property type="match status" value="1"/>
</dbReference>
<dbReference type="PANTHER" id="PTHR43607">
    <property type="entry name" value="V-TYPE PROTON ATPASE CATALYTIC SUBUNIT A"/>
    <property type="match status" value="1"/>
</dbReference>
<dbReference type="Pfam" id="PF00006">
    <property type="entry name" value="ATP-synt_ab"/>
    <property type="match status" value="1"/>
</dbReference>
<dbReference type="Pfam" id="PF02874">
    <property type="entry name" value="ATP-synt_ab_N"/>
    <property type="match status" value="1"/>
</dbReference>
<dbReference type="Pfam" id="PF16886">
    <property type="entry name" value="ATP-synt_ab_Xtn"/>
    <property type="match status" value="1"/>
</dbReference>
<dbReference type="Pfam" id="PF22919">
    <property type="entry name" value="ATP-synt_VA_C"/>
    <property type="match status" value="1"/>
</dbReference>
<dbReference type="SUPFAM" id="SSF47917">
    <property type="entry name" value="C-terminal domain of alpha and beta subunits of F1 ATP synthase"/>
    <property type="match status" value="1"/>
</dbReference>
<dbReference type="SUPFAM" id="SSF50615">
    <property type="entry name" value="N-terminal domain of alpha and beta subunits of F1 ATP synthase"/>
    <property type="match status" value="1"/>
</dbReference>
<dbReference type="SUPFAM" id="SSF52540">
    <property type="entry name" value="P-loop containing nucleoside triphosphate hydrolases"/>
    <property type="match status" value="1"/>
</dbReference>
<dbReference type="PROSITE" id="PS00152">
    <property type="entry name" value="ATPASE_ALPHA_BETA"/>
    <property type="match status" value="1"/>
</dbReference>